<geneLocation type="plasmid">
    <name>megaplasmid Rsp</name>
</geneLocation>
<reference key="1">
    <citation type="journal article" date="2002" name="Nature">
        <title>Genome sequence of the plant pathogen Ralstonia solanacearum.</title>
        <authorList>
            <person name="Salanoubat M."/>
            <person name="Genin S."/>
            <person name="Artiguenave F."/>
            <person name="Gouzy J."/>
            <person name="Mangenot S."/>
            <person name="Arlat M."/>
            <person name="Billault A."/>
            <person name="Brottier P."/>
            <person name="Camus J.-C."/>
            <person name="Cattolico L."/>
            <person name="Chandler M."/>
            <person name="Choisne N."/>
            <person name="Claudel-Renard C."/>
            <person name="Cunnac S."/>
            <person name="Demange N."/>
            <person name="Gaspin C."/>
            <person name="Lavie M."/>
            <person name="Moisan A."/>
            <person name="Robert C."/>
            <person name="Saurin W."/>
            <person name="Schiex T."/>
            <person name="Siguier P."/>
            <person name="Thebault P."/>
            <person name="Whalen M."/>
            <person name="Wincker P."/>
            <person name="Levy M."/>
            <person name="Weissenbach J."/>
            <person name="Boucher C.A."/>
        </authorList>
    </citation>
    <scope>NUCLEOTIDE SEQUENCE [LARGE SCALE GENOMIC DNA]</scope>
    <source>
        <strain>ATCC BAA-1114 / GMI1000</strain>
    </source>
</reference>
<sequence>MIKTILVVCIGNICRSPMAQALLRQSLPGVSVISAGIGALSGYPADPSAVEVMAHHGIDISEHRAQQLTGSLVSRADLILVMDGAQKQEIQSRHPAKTGSVFRLGEMEQFDIADPYRKQLTAFEEALEMIQRGVDAWVPRIRALG</sequence>
<comment type="function">
    <text evidence="1">May be involved in assembly or function of the EPS I polymerization/export complex and/or the EpsB ATPase. Alternatively it may function in the removal of the terminal phosphate from C55-isoprenyl pyrophosphate in order to recycle the C55-isoprenyl phosphate lipid carrier used in the synthesis of polysaccharide repeat units (By similarity).</text>
</comment>
<comment type="catalytic activity">
    <reaction>
        <text>O-phospho-L-tyrosyl-[protein] + H2O = L-tyrosyl-[protein] + phosphate</text>
        <dbReference type="Rhea" id="RHEA:10684"/>
        <dbReference type="Rhea" id="RHEA-COMP:10136"/>
        <dbReference type="Rhea" id="RHEA-COMP:20101"/>
        <dbReference type="ChEBI" id="CHEBI:15377"/>
        <dbReference type="ChEBI" id="CHEBI:43474"/>
        <dbReference type="ChEBI" id="CHEBI:46858"/>
        <dbReference type="ChEBI" id="CHEBI:61978"/>
        <dbReference type="EC" id="3.1.3.48"/>
    </reaction>
</comment>
<comment type="pathway">
    <text>Glycan metabolism; exopolysaccharide biosynthesis.</text>
</comment>
<comment type="similarity">
    <text evidence="3">Belongs to the low molecular weight phosphotyrosine protein phosphatase family.</text>
</comment>
<protein>
    <recommendedName>
        <fullName>Probable low molecular weight protein-tyrosine-phosphatase EpsP</fullName>
        <ecNumber>3.1.3.48</ecNumber>
    </recommendedName>
</protein>
<gene>
    <name type="primary">epsP</name>
    <name type="ordered locus">RSp1019</name>
    <name type="ORF">RS02353</name>
</gene>
<organism>
    <name type="scientific">Ralstonia nicotianae (strain ATCC BAA-1114 / GMI1000)</name>
    <name type="common">Ralstonia solanacearum</name>
    <dbReference type="NCBI Taxonomy" id="267608"/>
    <lineage>
        <taxon>Bacteria</taxon>
        <taxon>Pseudomonadati</taxon>
        <taxon>Pseudomonadota</taxon>
        <taxon>Betaproteobacteria</taxon>
        <taxon>Burkholderiales</taxon>
        <taxon>Burkholderiaceae</taxon>
        <taxon>Ralstonia</taxon>
        <taxon>Ralstonia solanacearum species complex</taxon>
    </lineage>
</organism>
<name>EPSP_RALN1</name>
<keyword id="KW-0378">Hydrolase</keyword>
<keyword id="KW-0448">Lipopolysaccharide biosynthesis</keyword>
<keyword id="KW-0614">Plasmid</keyword>
<keyword id="KW-0904">Protein phosphatase</keyword>
<keyword id="KW-1185">Reference proteome</keyword>
<feature type="chain" id="PRO_0000046570" description="Probable low molecular weight protein-tyrosine-phosphatase EpsP">
    <location>
        <begin position="1"/>
        <end position="145"/>
    </location>
</feature>
<feature type="active site" description="Nucleophile" evidence="2">
    <location>
        <position position="9"/>
    </location>
</feature>
<feature type="active site" evidence="2">
    <location>
        <position position="15"/>
    </location>
</feature>
<feature type="active site" description="Proton donor" evidence="2">
    <location>
        <position position="114"/>
    </location>
</feature>
<evidence type="ECO:0000250" key="1"/>
<evidence type="ECO:0000250" key="2">
    <source>
        <dbReference type="UniProtKB" id="P11064"/>
    </source>
</evidence>
<evidence type="ECO:0000305" key="3"/>
<accession>P58596</accession>
<proteinExistence type="inferred from homology"/>
<dbReference type="EC" id="3.1.3.48"/>
<dbReference type="EMBL" id="AL646053">
    <property type="protein sequence ID" value="CAD18170.1"/>
    <property type="molecule type" value="Genomic_DNA"/>
</dbReference>
<dbReference type="RefSeq" id="WP_011004309.1">
    <property type="nucleotide sequence ID" value="NC_003296.1"/>
</dbReference>
<dbReference type="SMR" id="P58596"/>
<dbReference type="STRING" id="267608.RSp1019"/>
<dbReference type="EnsemblBacteria" id="CAD18170">
    <property type="protein sequence ID" value="CAD18170"/>
    <property type="gene ID" value="RSp1019"/>
</dbReference>
<dbReference type="KEGG" id="rso:RSp1019"/>
<dbReference type="eggNOG" id="COG0394">
    <property type="taxonomic scope" value="Bacteria"/>
</dbReference>
<dbReference type="HOGENOM" id="CLU_071415_1_1_4"/>
<dbReference type="UniPathway" id="UPA00631"/>
<dbReference type="Proteomes" id="UP000001436">
    <property type="component" value="Plasmid megaplasmid Rsp"/>
</dbReference>
<dbReference type="GO" id="GO:0004725">
    <property type="term" value="F:protein tyrosine phosphatase activity"/>
    <property type="evidence" value="ECO:0007669"/>
    <property type="project" value="UniProtKB-EC"/>
</dbReference>
<dbReference type="GO" id="GO:0009103">
    <property type="term" value="P:lipopolysaccharide biosynthetic process"/>
    <property type="evidence" value="ECO:0007669"/>
    <property type="project" value="UniProtKB-KW"/>
</dbReference>
<dbReference type="CDD" id="cd16343">
    <property type="entry name" value="LMWPTP"/>
    <property type="match status" value="1"/>
</dbReference>
<dbReference type="Gene3D" id="3.40.50.2300">
    <property type="match status" value="1"/>
</dbReference>
<dbReference type="InterPro" id="IPR050438">
    <property type="entry name" value="LMW_PTPase"/>
</dbReference>
<dbReference type="InterPro" id="IPR023485">
    <property type="entry name" value="Ptyr_pPase"/>
</dbReference>
<dbReference type="InterPro" id="IPR036196">
    <property type="entry name" value="Ptyr_pPase_sf"/>
</dbReference>
<dbReference type="InterPro" id="IPR017867">
    <property type="entry name" value="Tyr_phospatase_low_mol_wt"/>
</dbReference>
<dbReference type="PANTHER" id="PTHR11717">
    <property type="entry name" value="LOW MOLECULAR WEIGHT PROTEIN TYROSINE PHOSPHATASE"/>
    <property type="match status" value="1"/>
</dbReference>
<dbReference type="PANTHER" id="PTHR11717:SF31">
    <property type="entry name" value="LOW MOLECULAR WEIGHT PROTEIN-TYROSINE-PHOSPHATASE ETP-RELATED"/>
    <property type="match status" value="1"/>
</dbReference>
<dbReference type="Pfam" id="PF01451">
    <property type="entry name" value="LMWPc"/>
    <property type="match status" value="1"/>
</dbReference>
<dbReference type="PRINTS" id="PR00719">
    <property type="entry name" value="LMWPTPASE"/>
</dbReference>
<dbReference type="SMART" id="SM00226">
    <property type="entry name" value="LMWPc"/>
    <property type="match status" value="1"/>
</dbReference>
<dbReference type="SUPFAM" id="SSF52788">
    <property type="entry name" value="Phosphotyrosine protein phosphatases I"/>
    <property type="match status" value="1"/>
</dbReference>